<name>RRF_CHLPB</name>
<organism>
    <name type="scientific">Chlorobium phaeobacteroides (strain BS1)</name>
    <dbReference type="NCBI Taxonomy" id="331678"/>
    <lineage>
        <taxon>Bacteria</taxon>
        <taxon>Pseudomonadati</taxon>
        <taxon>Chlorobiota</taxon>
        <taxon>Chlorobiia</taxon>
        <taxon>Chlorobiales</taxon>
        <taxon>Chlorobiaceae</taxon>
        <taxon>Chlorobium/Pelodictyon group</taxon>
        <taxon>Chlorobium</taxon>
    </lineage>
</organism>
<feature type="chain" id="PRO_1000090723" description="Ribosome-recycling factor">
    <location>
        <begin position="1"/>
        <end position="186"/>
    </location>
</feature>
<comment type="function">
    <text evidence="1">Responsible for the release of ribosomes from messenger RNA at the termination of protein biosynthesis. May increase the efficiency of translation by recycling ribosomes from one round of translation to another.</text>
</comment>
<comment type="subcellular location">
    <subcellularLocation>
        <location evidence="1">Cytoplasm</location>
    </subcellularLocation>
</comment>
<comment type="similarity">
    <text evidence="1">Belongs to the RRF family.</text>
</comment>
<keyword id="KW-0963">Cytoplasm</keyword>
<keyword id="KW-0648">Protein biosynthesis</keyword>
<gene>
    <name evidence="1" type="primary">frr</name>
    <name type="ordered locus">Cphamn1_2061</name>
</gene>
<reference key="1">
    <citation type="submission" date="2008-06" db="EMBL/GenBank/DDBJ databases">
        <title>Complete sequence of Chlorobium phaeobacteroides BS1.</title>
        <authorList>
            <consortium name="US DOE Joint Genome Institute"/>
            <person name="Lucas S."/>
            <person name="Copeland A."/>
            <person name="Lapidus A."/>
            <person name="Glavina del Rio T."/>
            <person name="Dalin E."/>
            <person name="Tice H."/>
            <person name="Bruce D."/>
            <person name="Goodwin L."/>
            <person name="Pitluck S."/>
            <person name="Schmutz J."/>
            <person name="Larimer F."/>
            <person name="Land M."/>
            <person name="Hauser L."/>
            <person name="Kyrpides N."/>
            <person name="Ovchinnikova G."/>
            <person name="Li T."/>
            <person name="Liu Z."/>
            <person name="Zhao F."/>
            <person name="Overmann J."/>
            <person name="Bryant D.A."/>
            <person name="Richardson P."/>
        </authorList>
    </citation>
    <scope>NUCLEOTIDE SEQUENCE [LARGE SCALE GENOMIC DNA]</scope>
    <source>
        <strain>BS1</strain>
    </source>
</reference>
<sequence>MSLREITQKAEAKMKKSVESFQHEIAAIRTGKATTALLDHVKVDAYGQTMPLKQIGNVGVQDAHTLMVQVWDKSMVAATEKAIRDANLGLNPVAEGQSIRVSIPPLNEERRKEYVKLTKKYGEDAKIALRNLRREMLHGADKLEKDKEIGEDAKANCKKDADNLVHKYEKQISDMIVQKEKEIMEV</sequence>
<accession>B3EMY2</accession>
<evidence type="ECO:0000255" key="1">
    <source>
        <dbReference type="HAMAP-Rule" id="MF_00040"/>
    </source>
</evidence>
<protein>
    <recommendedName>
        <fullName evidence="1">Ribosome-recycling factor</fullName>
        <shortName evidence="1">RRF</shortName>
    </recommendedName>
    <alternativeName>
        <fullName evidence="1">Ribosome-releasing factor</fullName>
    </alternativeName>
</protein>
<proteinExistence type="inferred from homology"/>
<dbReference type="EMBL" id="CP001101">
    <property type="protein sequence ID" value="ACE04971.1"/>
    <property type="molecule type" value="Genomic_DNA"/>
</dbReference>
<dbReference type="SMR" id="B3EMY2"/>
<dbReference type="STRING" id="331678.Cphamn1_2061"/>
<dbReference type="KEGG" id="cpb:Cphamn1_2061"/>
<dbReference type="eggNOG" id="COG0233">
    <property type="taxonomic scope" value="Bacteria"/>
</dbReference>
<dbReference type="HOGENOM" id="CLU_073981_2_0_10"/>
<dbReference type="OrthoDB" id="9804006at2"/>
<dbReference type="GO" id="GO:0005829">
    <property type="term" value="C:cytosol"/>
    <property type="evidence" value="ECO:0007669"/>
    <property type="project" value="GOC"/>
</dbReference>
<dbReference type="GO" id="GO:0043023">
    <property type="term" value="F:ribosomal large subunit binding"/>
    <property type="evidence" value="ECO:0007669"/>
    <property type="project" value="TreeGrafter"/>
</dbReference>
<dbReference type="GO" id="GO:0002184">
    <property type="term" value="P:cytoplasmic translational termination"/>
    <property type="evidence" value="ECO:0007669"/>
    <property type="project" value="TreeGrafter"/>
</dbReference>
<dbReference type="CDD" id="cd00520">
    <property type="entry name" value="RRF"/>
    <property type="match status" value="1"/>
</dbReference>
<dbReference type="FunFam" id="3.30.1360.40:FF:000001">
    <property type="entry name" value="Ribosome-recycling factor"/>
    <property type="match status" value="1"/>
</dbReference>
<dbReference type="Gene3D" id="3.30.1360.40">
    <property type="match status" value="1"/>
</dbReference>
<dbReference type="Gene3D" id="1.10.132.20">
    <property type="entry name" value="Ribosome-recycling factor"/>
    <property type="match status" value="1"/>
</dbReference>
<dbReference type="HAMAP" id="MF_00040">
    <property type="entry name" value="RRF"/>
    <property type="match status" value="1"/>
</dbReference>
<dbReference type="InterPro" id="IPR002661">
    <property type="entry name" value="Ribosome_recyc_fac"/>
</dbReference>
<dbReference type="InterPro" id="IPR023584">
    <property type="entry name" value="Ribosome_recyc_fac_dom"/>
</dbReference>
<dbReference type="InterPro" id="IPR036191">
    <property type="entry name" value="RRF_sf"/>
</dbReference>
<dbReference type="NCBIfam" id="TIGR00496">
    <property type="entry name" value="frr"/>
    <property type="match status" value="1"/>
</dbReference>
<dbReference type="PANTHER" id="PTHR20982:SF3">
    <property type="entry name" value="MITOCHONDRIAL RIBOSOME RECYCLING FACTOR PSEUDO 1"/>
    <property type="match status" value="1"/>
</dbReference>
<dbReference type="PANTHER" id="PTHR20982">
    <property type="entry name" value="RIBOSOME RECYCLING FACTOR"/>
    <property type="match status" value="1"/>
</dbReference>
<dbReference type="Pfam" id="PF01765">
    <property type="entry name" value="RRF"/>
    <property type="match status" value="1"/>
</dbReference>
<dbReference type="SUPFAM" id="SSF55194">
    <property type="entry name" value="Ribosome recycling factor, RRF"/>
    <property type="match status" value="1"/>
</dbReference>